<accession>Q9USQ9</accession>
<evidence type="ECO:0000250" key="1"/>
<evidence type="ECO:0000255" key="2">
    <source>
        <dbReference type="PROSITE-ProRule" id="PRU00809"/>
    </source>
</evidence>
<evidence type="ECO:0000269" key="3">
    <source>
    </source>
</evidence>
<comment type="function">
    <text evidence="1">Non-catalytic component of the proteasome, a multicatalytic proteinase complex which is characterized by its ability to cleave peptides with Arg, Phe, Tyr, Leu, and Glu adjacent to the leaving group at neutral or slightly basic pH. The proteasome has an ATP-dependent proteolytic activity (By similarity).</text>
</comment>
<comment type="subunit">
    <text evidence="1">The 26S proteasome consists of a 20S proteasome core and two 19S regulatory subunits. The 20S proteasome core is composed of 28 subunits that are arranged in four stacked rings, resulting in a barrel-shaped structure. The two end rings are each formed by seven alpha subunits, and the two central rings are each formed by seven beta subunits. The catalytic chamber with the active sites is on the inside of the barrel (By similarity).</text>
</comment>
<comment type="subcellular location">
    <subcellularLocation>
        <location evidence="2 3">Cytoplasm</location>
    </subcellularLocation>
    <subcellularLocation>
        <location evidence="3">Nucleus</location>
    </subcellularLocation>
</comment>
<comment type="similarity">
    <text evidence="2">Belongs to the peptidase T1B family.</text>
</comment>
<gene>
    <name type="ORF">SPBC577.10</name>
</gene>
<protein>
    <recommendedName>
        <fullName>Probable proteasome subunit beta type-7</fullName>
    </recommendedName>
</protein>
<name>PSB7_SCHPO</name>
<proteinExistence type="inferred from homology"/>
<keyword id="KW-0963">Cytoplasm</keyword>
<keyword id="KW-0539">Nucleus</keyword>
<keyword id="KW-0647">Proteasome</keyword>
<keyword id="KW-1185">Reference proteome</keyword>
<reference key="1">
    <citation type="journal article" date="2002" name="Nature">
        <title>The genome sequence of Schizosaccharomyces pombe.</title>
        <authorList>
            <person name="Wood V."/>
            <person name="Gwilliam R."/>
            <person name="Rajandream M.A."/>
            <person name="Lyne M.H."/>
            <person name="Lyne R."/>
            <person name="Stewart A."/>
            <person name="Sgouros J.G."/>
            <person name="Peat N."/>
            <person name="Hayles J."/>
            <person name="Baker S.G."/>
            <person name="Basham D."/>
            <person name="Bowman S."/>
            <person name="Brooks K."/>
            <person name="Brown D."/>
            <person name="Brown S."/>
            <person name="Chillingworth T."/>
            <person name="Churcher C.M."/>
            <person name="Collins M."/>
            <person name="Connor R."/>
            <person name="Cronin A."/>
            <person name="Davis P."/>
            <person name="Feltwell T."/>
            <person name="Fraser A."/>
            <person name="Gentles S."/>
            <person name="Goble A."/>
            <person name="Hamlin N."/>
            <person name="Harris D.E."/>
            <person name="Hidalgo J."/>
            <person name="Hodgson G."/>
            <person name="Holroyd S."/>
            <person name="Hornsby T."/>
            <person name="Howarth S."/>
            <person name="Huckle E.J."/>
            <person name="Hunt S."/>
            <person name="Jagels K."/>
            <person name="James K.D."/>
            <person name="Jones L."/>
            <person name="Jones M."/>
            <person name="Leather S."/>
            <person name="McDonald S."/>
            <person name="McLean J."/>
            <person name="Mooney P."/>
            <person name="Moule S."/>
            <person name="Mungall K.L."/>
            <person name="Murphy L.D."/>
            <person name="Niblett D."/>
            <person name="Odell C."/>
            <person name="Oliver K."/>
            <person name="O'Neil S."/>
            <person name="Pearson D."/>
            <person name="Quail M.A."/>
            <person name="Rabbinowitsch E."/>
            <person name="Rutherford K.M."/>
            <person name="Rutter S."/>
            <person name="Saunders D."/>
            <person name="Seeger K."/>
            <person name="Sharp S."/>
            <person name="Skelton J."/>
            <person name="Simmonds M.N."/>
            <person name="Squares R."/>
            <person name="Squares S."/>
            <person name="Stevens K."/>
            <person name="Taylor K."/>
            <person name="Taylor R.G."/>
            <person name="Tivey A."/>
            <person name="Walsh S.V."/>
            <person name="Warren T."/>
            <person name="Whitehead S."/>
            <person name="Woodward J.R."/>
            <person name="Volckaert G."/>
            <person name="Aert R."/>
            <person name="Robben J."/>
            <person name="Grymonprez B."/>
            <person name="Weltjens I."/>
            <person name="Vanstreels E."/>
            <person name="Rieger M."/>
            <person name="Schaefer M."/>
            <person name="Mueller-Auer S."/>
            <person name="Gabel C."/>
            <person name="Fuchs M."/>
            <person name="Duesterhoeft A."/>
            <person name="Fritzc C."/>
            <person name="Holzer E."/>
            <person name="Moestl D."/>
            <person name="Hilbert H."/>
            <person name="Borzym K."/>
            <person name="Langer I."/>
            <person name="Beck A."/>
            <person name="Lehrach H."/>
            <person name="Reinhardt R."/>
            <person name="Pohl T.M."/>
            <person name="Eger P."/>
            <person name="Zimmermann W."/>
            <person name="Wedler H."/>
            <person name="Wambutt R."/>
            <person name="Purnelle B."/>
            <person name="Goffeau A."/>
            <person name="Cadieu E."/>
            <person name="Dreano S."/>
            <person name="Gloux S."/>
            <person name="Lelaure V."/>
            <person name="Mottier S."/>
            <person name="Galibert F."/>
            <person name="Aves S.J."/>
            <person name="Xiang Z."/>
            <person name="Hunt C."/>
            <person name="Moore K."/>
            <person name="Hurst S.M."/>
            <person name="Lucas M."/>
            <person name="Rochet M."/>
            <person name="Gaillardin C."/>
            <person name="Tallada V.A."/>
            <person name="Garzon A."/>
            <person name="Thode G."/>
            <person name="Daga R.R."/>
            <person name="Cruzado L."/>
            <person name="Jimenez J."/>
            <person name="Sanchez M."/>
            <person name="del Rey F."/>
            <person name="Benito J."/>
            <person name="Dominguez A."/>
            <person name="Revuelta J.L."/>
            <person name="Moreno S."/>
            <person name="Armstrong J."/>
            <person name="Forsburg S.L."/>
            <person name="Cerutti L."/>
            <person name="Lowe T."/>
            <person name="McCombie W.R."/>
            <person name="Paulsen I."/>
            <person name="Potashkin J."/>
            <person name="Shpakovski G.V."/>
            <person name="Ussery D."/>
            <person name="Barrell B.G."/>
            <person name="Nurse P."/>
        </authorList>
    </citation>
    <scope>NUCLEOTIDE SEQUENCE [LARGE SCALE GENOMIC DNA]</scope>
    <source>
        <strain>972 / ATCC 24843</strain>
    </source>
</reference>
<reference key="2">
    <citation type="journal article" date="2006" name="Nat. Biotechnol.">
        <title>ORFeome cloning and global analysis of protein localization in the fission yeast Schizosaccharomyces pombe.</title>
        <authorList>
            <person name="Matsuyama A."/>
            <person name="Arai R."/>
            <person name="Yashiroda Y."/>
            <person name="Shirai A."/>
            <person name="Kamata A."/>
            <person name="Sekido S."/>
            <person name="Kobayashi Y."/>
            <person name="Hashimoto A."/>
            <person name="Hamamoto M."/>
            <person name="Hiraoka Y."/>
            <person name="Horinouchi S."/>
            <person name="Yoshida M."/>
        </authorList>
    </citation>
    <scope>SUBCELLULAR LOCATION [LARGE SCALE ANALYSIS]</scope>
</reference>
<feature type="chain" id="PRO_0000148072" description="Probable proteasome subunit beta type-7">
    <location>
        <begin position="1"/>
        <end position="262"/>
    </location>
</feature>
<sequence>MSFLELTEVWGKPQKDIFFPSGSEVEESTDAPIQRTVQPIVTGSSVLALKFADGVMIAADNLASYGSLARFYDVERLTKVGDNTIVGAGGDISDYQQIQRLLEKLEIKEGNYGDGYALQPSYIHEYLSKVLYARRNKLDPYWNQLIVAGVDGENKEPYVAFADLRGTTYSAPAIATGFAMHLALPMLRKATDDDRWKTLSKESARATIDECMRVLFYRDARSLNKFSVATITPEGIEFQTDQSVSSKWAFAEKQYGYGTQTV</sequence>
<dbReference type="EMBL" id="CU329671">
    <property type="protein sequence ID" value="CAB54818.1"/>
    <property type="molecule type" value="Genomic_DNA"/>
</dbReference>
<dbReference type="PIR" id="T40554">
    <property type="entry name" value="T40554"/>
</dbReference>
<dbReference type="SMR" id="Q9USQ9"/>
<dbReference type="BioGRID" id="277392">
    <property type="interactions" value="8"/>
</dbReference>
<dbReference type="ComplexPortal" id="CPX-9077">
    <property type="entry name" value="26S proteasome complex"/>
</dbReference>
<dbReference type="FunCoup" id="Q9USQ9">
    <property type="interactions" value="936"/>
</dbReference>
<dbReference type="STRING" id="284812.Q9USQ9"/>
<dbReference type="MEROPS" id="T01.987"/>
<dbReference type="iPTMnet" id="Q9USQ9"/>
<dbReference type="PaxDb" id="4896-SPBC577.10.1"/>
<dbReference type="EnsemblFungi" id="SPBC577.10.1">
    <property type="protein sequence ID" value="SPBC577.10.1:pep"/>
    <property type="gene ID" value="SPBC577.10"/>
</dbReference>
<dbReference type="KEGG" id="spo:2540875"/>
<dbReference type="PomBase" id="SPBC577.10"/>
<dbReference type="VEuPathDB" id="FungiDB:SPBC577.10"/>
<dbReference type="eggNOG" id="KOG0185">
    <property type="taxonomic scope" value="Eukaryota"/>
</dbReference>
<dbReference type="HOGENOM" id="CLU_072435_0_1_1"/>
<dbReference type="InParanoid" id="Q9USQ9"/>
<dbReference type="OMA" id="QPIMRRY"/>
<dbReference type="PhylomeDB" id="Q9USQ9"/>
<dbReference type="Reactome" id="R-SPO-1236978">
    <property type="pathway name" value="Cross-presentation of soluble exogenous antigens (endosomes)"/>
</dbReference>
<dbReference type="Reactome" id="R-SPO-350562">
    <property type="pathway name" value="Regulation of ornithine decarboxylase (ODC)"/>
</dbReference>
<dbReference type="Reactome" id="R-SPO-5687128">
    <property type="pathway name" value="MAPK6/MAPK4 signaling"/>
</dbReference>
<dbReference type="Reactome" id="R-SPO-5689603">
    <property type="pathway name" value="UCH proteinases"/>
</dbReference>
<dbReference type="Reactome" id="R-SPO-5689880">
    <property type="pathway name" value="Ub-specific processing proteases"/>
</dbReference>
<dbReference type="Reactome" id="R-SPO-68949">
    <property type="pathway name" value="Orc1 removal from chromatin"/>
</dbReference>
<dbReference type="Reactome" id="R-SPO-69017">
    <property type="pathway name" value="CDK-mediated phosphorylation and removal of Cdc6"/>
</dbReference>
<dbReference type="Reactome" id="R-SPO-69601">
    <property type="pathway name" value="Ubiquitin Mediated Degradation of Phosphorylated Cdc25A"/>
</dbReference>
<dbReference type="Reactome" id="R-SPO-75815">
    <property type="pathway name" value="Ubiquitin-dependent degradation of Cyclin D"/>
</dbReference>
<dbReference type="Reactome" id="R-SPO-8854050">
    <property type="pathway name" value="FBXL7 down-regulates AURKA during mitotic entry and in early mitosis"/>
</dbReference>
<dbReference type="Reactome" id="R-SPO-8948751">
    <property type="pathway name" value="Regulation of PTEN stability and activity"/>
</dbReference>
<dbReference type="Reactome" id="R-SPO-8951664">
    <property type="pathway name" value="Neddylation"/>
</dbReference>
<dbReference type="Reactome" id="R-SPO-9755511">
    <property type="pathway name" value="KEAP1-NFE2L2 pathway"/>
</dbReference>
<dbReference type="Reactome" id="R-SPO-983168">
    <property type="pathway name" value="Antigen processing: Ubiquitination &amp; Proteasome degradation"/>
</dbReference>
<dbReference type="Reactome" id="R-SPO-9907900">
    <property type="pathway name" value="Proteasome assembly"/>
</dbReference>
<dbReference type="PRO" id="PR:Q9USQ9"/>
<dbReference type="Proteomes" id="UP000002485">
    <property type="component" value="Chromosome II"/>
</dbReference>
<dbReference type="GO" id="GO:0005829">
    <property type="term" value="C:cytosol"/>
    <property type="evidence" value="ECO:0007005"/>
    <property type="project" value="PomBase"/>
</dbReference>
<dbReference type="GO" id="GO:0005634">
    <property type="term" value="C:nucleus"/>
    <property type="evidence" value="ECO:0007005"/>
    <property type="project" value="PomBase"/>
</dbReference>
<dbReference type="GO" id="GO:0019774">
    <property type="term" value="C:proteasome core complex, beta-subunit complex"/>
    <property type="evidence" value="ECO:0000314"/>
    <property type="project" value="PomBase"/>
</dbReference>
<dbReference type="GO" id="GO:0043161">
    <property type="term" value="P:proteasome-mediated ubiquitin-dependent protein catabolic process"/>
    <property type="evidence" value="ECO:0000318"/>
    <property type="project" value="GO_Central"/>
</dbReference>
<dbReference type="CDD" id="cd03760">
    <property type="entry name" value="proteasome_beta_type_4"/>
    <property type="match status" value="1"/>
</dbReference>
<dbReference type="FunFam" id="3.60.20.10:FF:000014">
    <property type="entry name" value="Proteasome subunit beta type-7"/>
    <property type="match status" value="1"/>
</dbReference>
<dbReference type="Gene3D" id="3.60.20.10">
    <property type="entry name" value="Glutamine Phosphoribosylpyrophosphate, subunit 1, domain 1"/>
    <property type="match status" value="1"/>
</dbReference>
<dbReference type="InterPro" id="IPR029055">
    <property type="entry name" value="Ntn_hydrolases_N"/>
</dbReference>
<dbReference type="InterPro" id="IPR016295">
    <property type="entry name" value="Proteasome_beta4"/>
</dbReference>
<dbReference type="InterPro" id="IPR016050">
    <property type="entry name" value="Proteasome_bsu_CS"/>
</dbReference>
<dbReference type="InterPro" id="IPR001353">
    <property type="entry name" value="Proteasome_sua/b"/>
</dbReference>
<dbReference type="InterPro" id="IPR023333">
    <property type="entry name" value="Proteasome_suB-type"/>
</dbReference>
<dbReference type="PANTHER" id="PTHR32194">
    <property type="entry name" value="METALLOPROTEASE TLDD"/>
    <property type="match status" value="1"/>
</dbReference>
<dbReference type="PANTHER" id="PTHR32194:SF6">
    <property type="entry name" value="PROTEASOME SUBUNIT BETA"/>
    <property type="match status" value="1"/>
</dbReference>
<dbReference type="Pfam" id="PF00227">
    <property type="entry name" value="Proteasome"/>
    <property type="match status" value="1"/>
</dbReference>
<dbReference type="PIRSF" id="PIRSF001213">
    <property type="entry name" value="Psome_endopept_beta"/>
    <property type="match status" value="1"/>
</dbReference>
<dbReference type="SUPFAM" id="SSF56235">
    <property type="entry name" value="N-terminal nucleophile aminohydrolases (Ntn hydrolases)"/>
    <property type="match status" value="1"/>
</dbReference>
<dbReference type="PROSITE" id="PS00854">
    <property type="entry name" value="PROTEASOME_BETA_1"/>
    <property type="match status" value="1"/>
</dbReference>
<dbReference type="PROSITE" id="PS51476">
    <property type="entry name" value="PROTEASOME_BETA_2"/>
    <property type="match status" value="1"/>
</dbReference>
<organism>
    <name type="scientific">Schizosaccharomyces pombe (strain 972 / ATCC 24843)</name>
    <name type="common">Fission yeast</name>
    <dbReference type="NCBI Taxonomy" id="284812"/>
    <lineage>
        <taxon>Eukaryota</taxon>
        <taxon>Fungi</taxon>
        <taxon>Dikarya</taxon>
        <taxon>Ascomycota</taxon>
        <taxon>Taphrinomycotina</taxon>
        <taxon>Schizosaccharomycetes</taxon>
        <taxon>Schizosaccharomycetales</taxon>
        <taxon>Schizosaccharomycetaceae</taxon>
        <taxon>Schizosaccharomyces</taxon>
    </lineage>
</organism>